<proteinExistence type="evidence at protein level"/>
<organism>
    <name type="scientific">Canine adenovirus serotype 2 (strain Toronto A 26-61)</name>
    <name type="common">CAdV-2</name>
    <name type="synonym">Canine adenovirus 2 (strain Toronto A 26-61)</name>
    <dbReference type="NCBI Taxonomy" id="69152"/>
    <lineage>
        <taxon>Viruses</taxon>
        <taxon>Varidnaviria</taxon>
        <taxon>Bamfordvirae</taxon>
        <taxon>Preplasmiviricota</taxon>
        <taxon>Tectiliviricetes</taxon>
        <taxon>Rowavirales</taxon>
        <taxon>Adenoviridae</taxon>
        <taxon>Mastadenovirus</taxon>
        <taxon>Canine mastadenovirus A</taxon>
    </lineage>
</organism>
<keyword id="KW-0002">3D-structure</keyword>
<keyword id="KW-0167">Capsid protein</keyword>
<keyword id="KW-1048">Host nucleus</keyword>
<keyword id="KW-0945">Host-virus interaction</keyword>
<keyword id="KW-0426">Late protein</keyword>
<keyword id="KW-1185">Reference proteome</keyword>
<keyword id="KW-1233">Viral attachment to host adhesion receptor</keyword>
<keyword id="KW-1161">Viral attachment to host cell</keyword>
<keyword id="KW-0946">Virion</keyword>
<keyword id="KW-1160">Virus entry into host cell</keyword>
<feature type="chain" id="PRO_0000221807" description="Fiber protein">
    <location>
        <begin position="1"/>
        <end position="542"/>
    </location>
</feature>
<feature type="region of interest" description="Disordered" evidence="2">
    <location>
        <begin position="1"/>
        <end position="24"/>
    </location>
</feature>
<feature type="strand" evidence="5">
    <location>
        <begin position="363"/>
        <end position="366"/>
    </location>
</feature>
<feature type="strand" evidence="5">
    <location>
        <begin position="375"/>
        <end position="377"/>
    </location>
</feature>
<feature type="strand" evidence="5">
    <location>
        <begin position="380"/>
        <end position="391"/>
    </location>
</feature>
<feature type="strand" evidence="5">
    <location>
        <begin position="393"/>
        <end position="404"/>
    </location>
</feature>
<feature type="helix" evidence="5">
    <location>
        <begin position="406"/>
        <end position="408"/>
    </location>
</feature>
<feature type="strand" evidence="5">
    <location>
        <begin position="409"/>
        <end position="411"/>
    </location>
</feature>
<feature type="strand" evidence="5">
    <location>
        <begin position="418"/>
        <end position="424"/>
    </location>
</feature>
<feature type="strand" evidence="5">
    <location>
        <begin position="434"/>
        <end position="436"/>
    </location>
</feature>
<feature type="strand" evidence="4">
    <location>
        <begin position="443"/>
        <end position="445"/>
    </location>
</feature>
<feature type="helix" evidence="5">
    <location>
        <begin position="458"/>
        <end position="463"/>
    </location>
</feature>
<feature type="turn" evidence="5">
    <location>
        <begin position="467"/>
        <end position="470"/>
    </location>
</feature>
<feature type="strand" evidence="5">
    <location>
        <begin position="474"/>
        <end position="483"/>
    </location>
</feature>
<feature type="turn" evidence="5">
    <location>
        <begin position="484"/>
        <end position="489"/>
    </location>
</feature>
<feature type="helix" evidence="5">
    <location>
        <begin position="491"/>
        <end position="493"/>
    </location>
</feature>
<feature type="strand" evidence="5">
    <location>
        <begin position="494"/>
        <end position="502"/>
    </location>
</feature>
<feature type="strand" evidence="5">
    <location>
        <begin position="509"/>
        <end position="517"/>
    </location>
</feature>
<feature type="helix" evidence="5">
    <location>
        <begin position="519"/>
        <end position="521"/>
    </location>
</feature>
<feature type="strand" evidence="5">
    <location>
        <begin position="522"/>
        <end position="524"/>
    </location>
</feature>
<feature type="strand" evidence="5">
    <location>
        <begin position="533"/>
        <end position="539"/>
    </location>
</feature>
<organismHost>
    <name type="scientific">Canis lupus familiaris</name>
    <name type="common">Dog</name>
    <name type="synonym">Canis familiaris</name>
    <dbReference type="NCBI Taxonomy" id="9615"/>
</organismHost>
<name>SPIKE_ADECT</name>
<protein>
    <recommendedName>
        <fullName>Fiber protein</fullName>
        <shortName>SPIKE</shortName>
    </recommendedName>
    <alternativeName>
        <fullName>Protein IV</fullName>
    </alternativeName>
</protein>
<comment type="function">
    <text evidence="1">Forms spikes that protrude from each vertex of the icosahedral capsid. Interacts with host receptor to provide virion initial attachment to target cell. Fiber proteins are shed during virus entry, when virus is still at the cell surface (By similarity).</text>
</comment>
<comment type="subunit">
    <text evidence="1">Homotrimer. Interacts (via N-terminal tail region) with pentons (By similarity).</text>
</comment>
<comment type="subcellular location">
    <subcellularLocation>
        <location evidence="1">Virion</location>
    </subcellularLocation>
    <subcellularLocation>
        <location evidence="1">Host nucleus</location>
    </subcellularLocation>
    <text evidence="1">Anchored to the pentons, protrudes from the virion surface.</text>
</comment>
<comment type="induction">
    <text>Expressed in the late phase of the viral replicative cycle.</text>
</comment>
<comment type="domain">
    <text evidence="1">The tail region anchors the fiber to penton base capsomers, whereas the shaft, built from several repeated motifs, allows the knob to protrude from the virion.</text>
</comment>
<comment type="miscellaneous">
    <text evidence="1">All late proteins expressed from the major late promoter are produced by alternative splicing and alternative polyadenylation of the same gene giving rise to non-overlapping ORFs. A leader sequence is present in the N-terminus of all these mRNAs and is recognized by the viral shutoff protein to provide expression although conventional translation via ribosome scanning from the cap has been shut off in the host cell (By similarity).</text>
</comment>
<comment type="similarity">
    <text evidence="3">Belongs to the adenoviridae fiber family.</text>
</comment>
<sequence>MKRTRRALPANYDPVYPYDAPGSSTQPPFFNNKQGLTESPPGTLAVNVSPPLTFSTLGAIKLSTGPGLTLNEGKLQASLGPGLITNTEGQITVENVNKVLSFTSPLHKNENTVSLALGDGLEDENGTLKVTFPTPPPPLQFSPPLTKTGGTVSLPLQDSMQVTNGKLGVKPTTYAPPLKKTDQQVSLQVGSGLTVINEQLQAVQPPATTYNEPLSKTDNSVSLQVGAGLAVQSGALVATPPPPLTFTSPLEKNENTVSLQVGAGLSVQNNALVATPPPPLTFAYPLVKNDNHVALSAGSGLRISGGSLTVATGPGLSHQNGTIGAVVGAGLKFENNAILAKLGNGLTIRDGAIEATQPPAAPITLWTGPGPSINGFINDTPVIRCFICLTRDSNLVTVNASFVGEGGYRIVSPTQSQFSLIMEFDQFGQLMSTGNINSTTTWGEKPWGNNTVQPRPSHTWKLCMPNREVYSTPAATISRCGLDSIAVDGAPSRSIDCMLIINKPKGVATYTLTFRFLNFNRLSGGTLFKTDVLTFTYVGENQ</sequence>
<reference key="1">
    <citation type="journal article" date="1995" name="Gene">
        <title>Sequence analysis of the canine adenovirus 2 fiber-encoding gene.</title>
        <authorList>
            <person name="Rasmussen U."/>
            <person name="Schlesinger Y."/>
            <person name="Pavirani A."/>
            <person name="Mehtali M."/>
        </authorList>
    </citation>
    <scope>NUCLEOTIDE SEQUENCE [GENOMIC DNA]</scope>
</reference>
<reference key="2">
    <citation type="submission" date="1996-12" db="EMBL/GenBank/DDBJ databases">
        <title>Complete DNA sequence and genomic organization of canine adenovirus type 2.</title>
        <authorList>
            <person name="Campbell J.B."/>
            <person name="Zhao Y."/>
        </authorList>
    </citation>
    <scope>NUCLEOTIDE SEQUENCE [LARGE SCALE GENOMIC DNA]</scope>
</reference>
<dbReference type="EMBL" id="Z37498">
    <property type="protein sequence ID" value="CAA85723.1"/>
    <property type="molecule type" value="Genomic_DNA"/>
</dbReference>
<dbReference type="EMBL" id="U77082">
    <property type="protein sequence ID" value="AAB38734.1"/>
    <property type="molecule type" value="Genomic_DNA"/>
</dbReference>
<dbReference type="PIR" id="S49219">
    <property type="entry name" value="S49219"/>
</dbReference>
<dbReference type="RefSeq" id="AP_000632.1">
    <property type="nucleotide sequence ID" value="AC_000020.1"/>
</dbReference>
<dbReference type="PDB" id="2J1K">
    <property type="method" value="X-ray"/>
    <property type="resolution" value="2.30 A"/>
    <property type="chains" value="C/D/E/F/H/I/L/M/N/Q/R/S=358-542"/>
</dbReference>
<dbReference type="PDB" id="2J2J">
    <property type="method" value="X-ray"/>
    <property type="resolution" value="1.50 A"/>
    <property type="chains" value="A/B/C/D/E/F=358-542"/>
</dbReference>
<dbReference type="PDB" id="2W9L">
    <property type="method" value="X-ray"/>
    <property type="resolution" value="2.91 A"/>
    <property type="chains" value="C/D/E/F/H/I/L/M/N/Q/R/S=358-542"/>
</dbReference>
<dbReference type="PDB" id="2WBV">
    <property type="method" value="X-ray"/>
    <property type="resolution" value="1.90 A"/>
    <property type="chains" value="A/B/C/D/E/F=358-542"/>
</dbReference>
<dbReference type="PDBsum" id="2J1K"/>
<dbReference type="PDBsum" id="2J2J"/>
<dbReference type="PDBsum" id="2W9L"/>
<dbReference type="PDBsum" id="2WBV"/>
<dbReference type="SMR" id="Q65914"/>
<dbReference type="UniLectin" id="Q65914"/>
<dbReference type="EvolutionaryTrace" id="Q65914"/>
<dbReference type="Proteomes" id="UP000118097">
    <property type="component" value="Segment"/>
</dbReference>
<dbReference type="GO" id="GO:0042025">
    <property type="term" value="C:host cell nucleus"/>
    <property type="evidence" value="ECO:0007669"/>
    <property type="project" value="UniProtKB-SubCell"/>
</dbReference>
<dbReference type="GO" id="GO:0019028">
    <property type="term" value="C:viral capsid"/>
    <property type="evidence" value="ECO:0007669"/>
    <property type="project" value="UniProtKB-KW"/>
</dbReference>
<dbReference type="GO" id="GO:0098671">
    <property type="term" value="P:adhesion receptor-mediated virion attachment to host cell"/>
    <property type="evidence" value="ECO:0007669"/>
    <property type="project" value="UniProtKB-KW"/>
</dbReference>
<dbReference type="GO" id="GO:0007155">
    <property type="term" value="P:cell adhesion"/>
    <property type="evidence" value="ECO:0007669"/>
    <property type="project" value="InterPro"/>
</dbReference>
<dbReference type="GO" id="GO:0046718">
    <property type="term" value="P:symbiont entry into host cell"/>
    <property type="evidence" value="ECO:0007669"/>
    <property type="project" value="UniProtKB-KW"/>
</dbReference>
<dbReference type="Gene3D" id="6.20.10.20">
    <property type="match status" value="5"/>
</dbReference>
<dbReference type="Gene3D" id="2.60.90.10">
    <property type="entry name" value="Adenovirus pIV-related, attachment domain"/>
    <property type="match status" value="1"/>
</dbReference>
<dbReference type="Gene3D" id="2.10.25.20">
    <property type="entry name" value="reovirus attachment protein sigma1, domain 1"/>
    <property type="match status" value="1"/>
</dbReference>
<dbReference type="InterPro" id="IPR000931">
    <property type="entry name" value="Adeno_fibre"/>
</dbReference>
<dbReference type="InterPro" id="IPR000978">
    <property type="entry name" value="Adeno_fibre_knob"/>
</dbReference>
<dbReference type="InterPro" id="IPR000939">
    <property type="entry name" value="Adenobir_fibre_prot_rpt/shaft"/>
</dbReference>
<dbReference type="InterPro" id="IPR008982">
    <property type="entry name" value="Adenovirus_pIV-like_att"/>
</dbReference>
<dbReference type="InterPro" id="IPR009013">
    <property type="entry name" value="Attachment_protein_shaft_sf"/>
</dbReference>
<dbReference type="Pfam" id="PF00541">
    <property type="entry name" value="Adeno_knob"/>
    <property type="match status" value="1"/>
</dbReference>
<dbReference type="Pfam" id="PF00608">
    <property type="entry name" value="Adeno_shaft"/>
    <property type="match status" value="8"/>
</dbReference>
<dbReference type="PRINTS" id="PR00307">
    <property type="entry name" value="ADENOVSFIBRE"/>
</dbReference>
<dbReference type="SUPFAM" id="SSF51225">
    <property type="entry name" value="Fibre shaft of virus attachment proteins"/>
    <property type="match status" value="3"/>
</dbReference>
<dbReference type="SUPFAM" id="SSF49835">
    <property type="entry name" value="Virus attachment protein globular domain"/>
    <property type="match status" value="1"/>
</dbReference>
<gene>
    <name type="ORF">L5</name>
</gene>
<evidence type="ECO:0000250" key="1"/>
<evidence type="ECO:0000256" key="2">
    <source>
        <dbReference type="SAM" id="MobiDB-lite"/>
    </source>
</evidence>
<evidence type="ECO:0000305" key="3"/>
<evidence type="ECO:0007829" key="4">
    <source>
        <dbReference type="PDB" id="2J1K"/>
    </source>
</evidence>
<evidence type="ECO:0007829" key="5">
    <source>
        <dbReference type="PDB" id="2J2J"/>
    </source>
</evidence>
<accession>Q65914</accession>